<proteinExistence type="inferred from homology"/>
<evidence type="ECO:0000255" key="1">
    <source>
        <dbReference type="HAMAP-Rule" id="MF_00827"/>
    </source>
</evidence>
<comment type="similarity">
    <text evidence="1">Belongs to the UPF0386 family.</text>
</comment>
<sequence>MNLSRQEQRTLHVLAKGGRITHIRDASGRVTAVECYSREGLLLADCTLAVFKKLKTKKLIKSVNGQPYRINTTGLNNVRAQPDNR</sequence>
<protein>
    <recommendedName>
        <fullName evidence="1">UPF0386 protein YjhX</fullName>
    </recommendedName>
</protein>
<accession>B5R9P0</accession>
<organism>
    <name type="scientific">Salmonella gallinarum (strain 287/91 / NCTC 13346)</name>
    <dbReference type="NCBI Taxonomy" id="550538"/>
    <lineage>
        <taxon>Bacteria</taxon>
        <taxon>Pseudomonadati</taxon>
        <taxon>Pseudomonadota</taxon>
        <taxon>Gammaproteobacteria</taxon>
        <taxon>Enterobacterales</taxon>
        <taxon>Enterobacteriaceae</taxon>
        <taxon>Salmonella</taxon>
    </lineage>
</organism>
<dbReference type="EMBL" id="AM933173">
    <property type="protein sequence ID" value="CAR40093.1"/>
    <property type="molecule type" value="Genomic_DNA"/>
</dbReference>
<dbReference type="RefSeq" id="WP_001054380.1">
    <property type="nucleotide sequence ID" value="NC_011274.1"/>
</dbReference>
<dbReference type="KEGG" id="seg:SG4331"/>
<dbReference type="HOGENOM" id="CLU_164736_0_0_6"/>
<dbReference type="Proteomes" id="UP000008321">
    <property type="component" value="Chromosome"/>
</dbReference>
<dbReference type="HAMAP" id="MF_00827">
    <property type="entry name" value="UPF0386"/>
    <property type="match status" value="1"/>
</dbReference>
<dbReference type="InterPro" id="IPR018654">
    <property type="entry name" value="YjhX_toxin"/>
</dbReference>
<dbReference type="NCBIfam" id="NF010240">
    <property type="entry name" value="PRK13687.1"/>
    <property type="match status" value="1"/>
</dbReference>
<dbReference type="Pfam" id="PF09857">
    <property type="entry name" value="YjhX_toxin"/>
    <property type="match status" value="1"/>
</dbReference>
<feature type="chain" id="PRO_1000200709" description="UPF0386 protein YjhX">
    <location>
        <begin position="1"/>
        <end position="85"/>
    </location>
</feature>
<name>YJHX_SALG2</name>
<reference key="1">
    <citation type="journal article" date="2008" name="Genome Res.">
        <title>Comparative genome analysis of Salmonella enteritidis PT4 and Salmonella gallinarum 287/91 provides insights into evolutionary and host adaptation pathways.</title>
        <authorList>
            <person name="Thomson N.R."/>
            <person name="Clayton D.J."/>
            <person name="Windhorst D."/>
            <person name="Vernikos G."/>
            <person name="Davidson S."/>
            <person name="Churcher C."/>
            <person name="Quail M.A."/>
            <person name="Stevens M."/>
            <person name="Jones M.A."/>
            <person name="Watson M."/>
            <person name="Barron A."/>
            <person name="Layton A."/>
            <person name="Pickard D."/>
            <person name="Kingsley R.A."/>
            <person name="Bignell A."/>
            <person name="Clark L."/>
            <person name="Harris B."/>
            <person name="Ormond D."/>
            <person name="Abdellah Z."/>
            <person name="Brooks K."/>
            <person name="Cherevach I."/>
            <person name="Chillingworth T."/>
            <person name="Woodward J."/>
            <person name="Norberczak H."/>
            <person name="Lord A."/>
            <person name="Arrowsmith C."/>
            <person name="Jagels K."/>
            <person name="Moule S."/>
            <person name="Mungall K."/>
            <person name="Saunders M."/>
            <person name="Whitehead S."/>
            <person name="Chabalgoity J.A."/>
            <person name="Maskell D."/>
            <person name="Humphreys T."/>
            <person name="Roberts M."/>
            <person name="Barrow P.A."/>
            <person name="Dougan G."/>
            <person name="Parkhill J."/>
        </authorList>
    </citation>
    <scope>NUCLEOTIDE SEQUENCE [LARGE SCALE GENOMIC DNA]</scope>
    <source>
        <strain>287/91 / NCTC 13346</strain>
    </source>
</reference>
<gene>
    <name evidence="1" type="primary">yjhX</name>
    <name type="ordered locus">SG4331</name>
</gene>